<proteinExistence type="inferred from homology"/>
<protein>
    <recommendedName>
        <fullName evidence="1">Photosystem II reaction center protein Z</fullName>
        <shortName evidence="1">PSII-Z</shortName>
    </recommendedName>
</protein>
<reference key="1">
    <citation type="journal article" date="2008" name="BMC Evol. Biol.">
        <title>The complete plastid genome sequence of Welwitschia mirabilis: an unusually compact plastome with accelerated divergence rates.</title>
        <authorList>
            <person name="McCoy S.R."/>
            <person name="Kuehl J.V."/>
            <person name="Boore J.L."/>
            <person name="Raubeson L.A."/>
        </authorList>
    </citation>
    <scope>NUCLEOTIDE SEQUENCE [LARGE SCALE GENOMIC DNA]</scope>
</reference>
<reference key="2">
    <citation type="journal article" date="2009" name="Mol. Phylogenet. Evol.">
        <title>Evolution of reduced and compact chloroplast genomes (cpDNAs) in gnetophytes: Selection toward a lower-cost strategy.</title>
        <authorList>
            <person name="Wu C.-S."/>
            <person name="Lai Y.-T."/>
            <person name="Lin C.-P."/>
            <person name="Wang Y.-N."/>
            <person name="Chaw S.-M."/>
        </authorList>
    </citation>
    <scope>NUCLEOTIDE SEQUENCE [LARGE SCALE GENOMIC DNA]</scope>
</reference>
<accession>B2Y1U7</accession>
<geneLocation type="chloroplast"/>
<sequence length="62" mass="6721">MTIVFQLTMFALIAISFLLIIGVPITFASPDGWSSNKNIVFSGVSLWIVLVFAVGILNSFIS</sequence>
<evidence type="ECO:0000255" key="1">
    <source>
        <dbReference type="HAMAP-Rule" id="MF_00644"/>
    </source>
</evidence>
<name>PSBZ_WELMI</name>
<dbReference type="EMBL" id="EU342371">
    <property type="protein sequence ID" value="ABY26777.1"/>
    <property type="molecule type" value="Genomic_DNA"/>
</dbReference>
<dbReference type="EMBL" id="AP009568">
    <property type="protein sequence ID" value="BAH11172.1"/>
    <property type="molecule type" value="Genomic_DNA"/>
</dbReference>
<dbReference type="RefSeq" id="YP_001876564.1">
    <property type="nucleotide sequence ID" value="NC_010654.1"/>
</dbReference>
<dbReference type="SMR" id="B2Y1U7"/>
<dbReference type="GeneID" id="6276180"/>
<dbReference type="GO" id="GO:0009535">
    <property type="term" value="C:chloroplast thylakoid membrane"/>
    <property type="evidence" value="ECO:0007669"/>
    <property type="project" value="UniProtKB-SubCell"/>
</dbReference>
<dbReference type="GO" id="GO:0009539">
    <property type="term" value="C:photosystem II reaction center"/>
    <property type="evidence" value="ECO:0007669"/>
    <property type="project" value="InterPro"/>
</dbReference>
<dbReference type="GO" id="GO:0015979">
    <property type="term" value="P:photosynthesis"/>
    <property type="evidence" value="ECO:0007669"/>
    <property type="project" value="UniProtKB-UniRule"/>
</dbReference>
<dbReference type="GO" id="GO:0042549">
    <property type="term" value="P:photosystem II stabilization"/>
    <property type="evidence" value="ECO:0007669"/>
    <property type="project" value="InterPro"/>
</dbReference>
<dbReference type="Gene3D" id="1.10.287.740">
    <property type="entry name" value="Photosystem II PsbZ, reaction centre"/>
    <property type="match status" value="1"/>
</dbReference>
<dbReference type="HAMAP" id="MF_00644">
    <property type="entry name" value="PSII_PsbZ"/>
    <property type="match status" value="1"/>
</dbReference>
<dbReference type="InterPro" id="IPR002644">
    <property type="entry name" value="PSII_PsbZ"/>
</dbReference>
<dbReference type="InterPro" id="IPR036512">
    <property type="entry name" value="PSII_PsbZ_sf"/>
</dbReference>
<dbReference type="NCBIfam" id="TIGR03043">
    <property type="entry name" value="PS_II_psbZ"/>
    <property type="match status" value="1"/>
</dbReference>
<dbReference type="PANTHER" id="PTHR34971">
    <property type="entry name" value="PHOTOSYSTEM II REACTION CENTER PROTEIN Z"/>
    <property type="match status" value="1"/>
</dbReference>
<dbReference type="PANTHER" id="PTHR34971:SF2">
    <property type="entry name" value="PHOTOSYSTEM II REACTION CENTER PROTEIN Z"/>
    <property type="match status" value="1"/>
</dbReference>
<dbReference type="Pfam" id="PF01737">
    <property type="entry name" value="Ycf9"/>
    <property type="match status" value="1"/>
</dbReference>
<dbReference type="SUPFAM" id="SSF161055">
    <property type="entry name" value="PsbZ-like"/>
    <property type="match status" value="1"/>
</dbReference>
<organism>
    <name type="scientific">Welwitschia mirabilis</name>
    <name type="common">Tree tumbo</name>
    <name type="synonym">Welwitschia bainesii</name>
    <dbReference type="NCBI Taxonomy" id="3377"/>
    <lineage>
        <taxon>Eukaryota</taxon>
        <taxon>Viridiplantae</taxon>
        <taxon>Streptophyta</taxon>
        <taxon>Embryophyta</taxon>
        <taxon>Tracheophyta</taxon>
        <taxon>Spermatophyta</taxon>
        <taxon>Gnetopsida</taxon>
        <taxon>Gnetidae</taxon>
        <taxon>Welwitschiales</taxon>
        <taxon>Welwitschiaceae</taxon>
        <taxon>Welwitschia</taxon>
    </lineage>
</organism>
<comment type="function">
    <text evidence="1">May control the interaction of photosystem II (PSII) cores with the light-harvesting antenna, regulates electron flow through the 2 photosystem reaction centers. PSII is a light-driven water plastoquinone oxidoreductase, using light energy to abstract electrons from H(2)O, generating a proton gradient subsequently used for ATP formation.</text>
</comment>
<comment type="subunit">
    <text evidence="1">PSII is composed of 1 copy each of membrane proteins PsbA, PsbB, PsbC, PsbD, PsbE, PsbF, PsbH, PsbI, PsbJ, PsbK, PsbL, PsbM, PsbT, PsbY, PsbZ, Psb30/Ycf12, at least 3 peripheral proteins of the oxygen-evolving complex and a large number of cofactors. It forms dimeric complexes.</text>
</comment>
<comment type="subcellular location">
    <subcellularLocation>
        <location evidence="1">Plastid</location>
        <location evidence="1">Chloroplast thylakoid membrane</location>
        <topology evidence="1">Multi-pass membrane protein</topology>
    </subcellularLocation>
</comment>
<comment type="similarity">
    <text evidence="1">Belongs to the PsbZ family.</text>
</comment>
<keyword id="KW-0150">Chloroplast</keyword>
<keyword id="KW-0472">Membrane</keyword>
<keyword id="KW-0602">Photosynthesis</keyword>
<keyword id="KW-0604">Photosystem II</keyword>
<keyword id="KW-0934">Plastid</keyword>
<keyword id="KW-0674">Reaction center</keyword>
<keyword id="KW-0793">Thylakoid</keyword>
<keyword id="KW-0812">Transmembrane</keyword>
<keyword id="KW-1133">Transmembrane helix</keyword>
<feature type="chain" id="PRO_1000147432" description="Photosystem II reaction center protein Z">
    <location>
        <begin position="1"/>
        <end position="62"/>
    </location>
</feature>
<feature type="transmembrane region" description="Helical" evidence="1">
    <location>
        <begin position="8"/>
        <end position="28"/>
    </location>
</feature>
<feature type="transmembrane region" description="Helical" evidence="1">
    <location>
        <begin position="41"/>
        <end position="61"/>
    </location>
</feature>
<gene>
    <name evidence="1" type="primary">psbZ</name>
</gene>